<keyword id="KW-0560">Oxidoreductase</keyword>
<proteinExistence type="inferred from homology"/>
<feature type="chain" id="PRO_0000138553" description="Peptide methionine sulfoxide reductase MsrA">
    <location>
        <begin position="1"/>
        <end position="177"/>
    </location>
</feature>
<feature type="active site" evidence="1">
    <location>
        <position position="15"/>
    </location>
</feature>
<sequence length="177" mass="19933">MTKESLEKATFAGGCFWCMVKPFDTQPGIEKVVSGYTGGHTVNPTYKEVCSGTTGHTEAVEITFDPAVFPYEKLVEVYWQQTDPTDAAGQFVDRGDSYRPVIFYHNEEQRQIAEKSKAALDASGRFKKPVVTEIAKAETFYPAEEYHQDFYKKEKAHYEGYQVASGRAAFIDANWKG</sequence>
<name>MSRA_LISIN</name>
<reference key="1">
    <citation type="journal article" date="2001" name="Science">
        <title>Comparative genomics of Listeria species.</title>
        <authorList>
            <person name="Glaser P."/>
            <person name="Frangeul L."/>
            <person name="Buchrieser C."/>
            <person name="Rusniok C."/>
            <person name="Amend A."/>
            <person name="Baquero F."/>
            <person name="Berche P."/>
            <person name="Bloecker H."/>
            <person name="Brandt P."/>
            <person name="Chakraborty T."/>
            <person name="Charbit A."/>
            <person name="Chetouani F."/>
            <person name="Couve E."/>
            <person name="de Daruvar A."/>
            <person name="Dehoux P."/>
            <person name="Domann E."/>
            <person name="Dominguez-Bernal G."/>
            <person name="Duchaud E."/>
            <person name="Durant L."/>
            <person name="Dussurget O."/>
            <person name="Entian K.-D."/>
            <person name="Fsihi H."/>
            <person name="Garcia-del Portillo F."/>
            <person name="Garrido P."/>
            <person name="Gautier L."/>
            <person name="Goebel W."/>
            <person name="Gomez-Lopez N."/>
            <person name="Hain T."/>
            <person name="Hauf J."/>
            <person name="Jackson D."/>
            <person name="Jones L.-M."/>
            <person name="Kaerst U."/>
            <person name="Kreft J."/>
            <person name="Kuhn M."/>
            <person name="Kunst F."/>
            <person name="Kurapkat G."/>
            <person name="Madueno E."/>
            <person name="Maitournam A."/>
            <person name="Mata Vicente J."/>
            <person name="Ng E."/>
            <person name="Nedjari H."/>
            <person name="Nordsiek G."/>
            <person name="Novella S."/>
            <person name="de Pablos B."/>
            <person name="Perez-Diaz J.-C."/>
            <person name="Purcell R."/>
            <person name="Remmel B."/>
            <person name="Rose M."/>
            <person name="Schlueter T."/>
            <person name="Simoes N."/>
            <person name="Tierrez A."/>
            <person name="Vazquez-Boland J.-A."/>
            <person name="Voss H."/>
            <person name="Wehland J."/>
            <person name="Cossart P."/>
        </authorList>
    </citation>
    <scope>NUCLEOTIDE SEQUENCE [LARGE SCALE GENOMIC DNA]</scope>
    <source>
        <strain>ATCC BAA-680 / CLIP 11262</strain>
    </source>
</reference>
<protein>
    <recommendedName>
        <fullName evidence="1">Peptide methionine sulfoxide reductase MsrA</fullName>
        <shortName evidence="1">Protein-methionine-S-oxide reductase</shortName>
        <ecNumber evidence="1">1.8.4.11</ecNumber>
    </recommendedName>
    <alternativeName>
        <fullName evidence="1">Peptide-methionine (S)-S-oxide reductase</fullName>
        <shortName evidence="1">Peptide Met(O) reductase</shortName>
    </alternativeName>
</protein>
<comment type="function">
    <text evidence="1">Has an important function as a repair enzyme for proteins that have been inactivated by oxidation. Catalyzes the reversible oxidation-reduction of methionine sulfoxide in proteins to methionine.</text>
</comment>
<comment type="catalytic activity">
    <reaction evidence="1">
        <text>L-methionyl-[protein] + [thioredoxin]-disulfide + H2O = L-methionyl-(S)-S-oxide-[protein] + [thioredoxin]-dithiol</text>
        <dbReference type="Rhea" id="RHEA:14217"/>
        <dbReference type="Rhea" id="RHEA-COMP:10698"/>
        <dbReference type="Rhea" id="RHEA-COMP:10700"/>
        <dbReference type="Rhea" id="RHEA-COMP:12313"/>
        <dbReference type="Rhea" id="RHEA-COMP:12315"/>
        <dbReference type="ChEBI" id="CHEBI:15377"/>
        <dbReference type="ChEBI" id="CHEBI:16044"/>
        <dbReference type="ChEBI" id="CHEBI:29950"/>
        <dbReference type="ChEBI" id="CHEBI:44120"/>
        <dbReference type="ChEBI" id="CHEBI:50058"/>
        <dbReference type="EC" id="1.8.4.11"/>
    </reaction>
</comment>
<comment type="catalytic activity">
    <reaction evidence="1">
        <text>[thioredoxin]-disulfide + L-methionine + H2O = L-methionine (S)-S-oxide + [thioredoxin]-dithiol</text>
        <dbReference type="Rhea" id="RHEA:19993"/>
        <dbReference type="Rhea" id="RHEA-COMP:10698"/>
        <dbReference type="Rhea" id="RHEA-COMP:10700"/>
        <dbReference type="ChEBI" id="CHEBI:15377"/>
        <dbReference type="ChEBI" id="CHEBI:29950"/>
        <dbReference type="ChEBI" id="CHEBI:50058"/>
        <dbReference type="ChEBI" id="CHEBI:57844"/>
        <dbReference type="ChEBI" id="CHEBI:58772"/>
        <dbReference type="EC" id="1.8.4.11"/>
    </reaction>
</comment>
<comment type="similarity">
    <text evidence="1">Belongs to the MsrA Met sulfoxide reductase family.</text>
</comment>
<evidence type="ECO:0000255" key="1">
    <source>
        <dbReference type="HAMAP-Rule" id="MF_01401"/>
    </source>
</evidence>
<accession>Q92AE8</accession>
<gene>
    <name evidence="1" type="primary">msrA</name>
    <name type="ordered locus">lin1974</name>
</gene>
<organism>
    <name type="scientific">Listeria innocua serovar 6a (strain ATCC BAA-680 / CLIP 11262)</name>
    <dbReference type="NCBI Taxonomy" id="272626"/>
    <lineage>
        <taxon>Bacteria</taxon>
        <taxon>Bacillati</taxon>
        <taxon>Bacillota</taxon>
        <taxon>Bacilli</taxon>
        <taxon>Bacillales</taxon>
        <taxon>Listeriaceae</taxon>
        <taxon>Listeria</taxon>
    </lineage>
</organism>
<dbReference type="EC" id="1.8.4.11" evidence="1"/>
<dbReference type="EMBL" id="AL596170">
    <property type="protein sequence ID" value="CAC97204.1"/>
    <property type="molecule type" value="Genomic_DNA"/>
</dbReference>
<dbReference type="PIR" id="AD1679">
    <property type="entry name" value="AD1679"/>
</dbReference>
<dbReference type="RefSeq" id="WP_003769341.1">
    <property type="nucleotide sequence ID" value="NC_003212.1"/>
</dbReference>
<dbReference type="SMR" id="Q92AE8"/>
<dbReference type="STRING" id="272626.gene:17566332"/>
<dbReference type="GeneID" id="93235312"/>
<dbReference type="KEGG" id="lin:lin1974"/>
<dbReference type="eggNOG" id="COG0225">
    <property type="taxonomic scope" value="Bacteria"/>
</dbReference>
<dbReference type="HOGENOM" id="CLU_031040_10_1_9"/>
<dbReference type="OrthoDB" id="4174719at2"/>
<dbReference type="Proteomes" id="UP000002513">
    <property type="component" value="Chromosome"/>
</dbReference>
<dbReference type="GO" id="GO:0033744">
    <property type="term" value="F:L-methionine:thioredoxin-disulfide S-oxidoreductase activity"/>
    <property type="evidence" value="ECO:0007669"/>
    <property type="project" value="RHEA"/>
</dbReference>
<dbReference type="GO" id="GO:0008113">
    <property type="term" value="F:peptide-methionine (S)-S-oxide reductase activity"/>
    <property type="evidence" value="ECO:0007669"/>
    <property type="project" value="UniProtKB-UniRule"/>
</dbReference>
<dbReference type="GO" id="GO:0036211">
    <property type="term" value="P:protein modification process"/>
    <property type="evidence" value="ECO:0007669"/>
    <property type="project" value="UniProtKB-UniRule"/>
</dbReference>
<dbReference type="FunFam" id="3.30.1060.10:FF:000003">
    <property type="entry name" value="Peptide methionine sulfoxide reductase MsrA"/>
    <property type="match status" value="1"/>
</dbReference>
<dbReference type="Gene3D" id="3.30.1060.10">
    <property type="entry name" value="Peptide methionine sulphoxide reductase MsrA"/>
    <property type="match status" value="1"/>
</dbReference>
<dbReference type="HAMAP" id="MF_01401">
    <property type="entry name" value="MsrA"/>
    <property type="match status" value="1"/>
</dbReference>
<dbReference type="InterPro" id="IPR002569">
    <property type="entry name" value="Met_Sox_Rdtase_MsrA_dom"/>
</dbReference>
<dbReference type="InterPro" id="IPR036509">
    <property type="entry name" value="Met_Sox_Rdtase_MsrA_sf"/>
</dbReference>
<dbReference type="NCBIfam" id="TIGR00401">
    <property type="entry name" value="msrA"/>
    <property type="match status" value="1"/>
</dbReference>
<dbReference type="PANTHER" id="PTHR43774">
    <property type="entry name" value="PEPTIDE METHIONINE SULFOXIDE REDUCTASE"/>
    <property type="match status" value="1"/>
</dbReference>
<dbReference type="PANTHER" id="PTHR43774:SF1">
    <property type="entry name" value="PEPTIDE METHIONINE SULFOXIDE REDUCTASE MSRA 2"/>
    <property type="match status" value="1"/>
</dbReference>
<dbReference type="Pfam" id="PF01625">
    <property type="entry name" value="PMSR"/>
    <property type="match status" value="1"/>
</dbReference>
<dbReference type="SUPFAM" id="SSF55068">
    <property type="entry name" value="Peptide methionine sulfoxide reductase"/>
    <property type="match status" value="1"/>
</dbReference>